<name>PANC_CORJK</name>
<feature type="chain" id="PRO_0000305431" description="Pantothenate synthetase">
    <location>
        <begin position="1"/>
        <end position="306"/>
    </location>
</feature>
<feature type="active site" description="Proton donor" evidence="1">
    <location>
        <position position="44"/>
    </location>
</feature>
<feature type="binding site" evidence="1">
    <location>
        <begin position="37"/>
        <end position="44"/>
    </location>
    <ligand>
        <name>ATP</name>
        <dbReference type="ChEBI" id="CHEBI:30616"/>
    </ligand>
</feature>
<feature type="binding site" evidence="1">
    <location>
        <position position="69"/>
    </location>
    <ligand>
        <name>(R)-pantoate</name>
        <dbReference type="ChEBI" id="CHEBI:15980"/>
    </ligand>
</feature>
<feature type="binding site" evidence="1">
    <location>
        <position position="69"/>
    </location>
    <ligand>
        <name>beta-alanine</name>
        <dbReference type="ChEBI" id="CHEBI:57966"/>
    </ligand>
</feature>
<feature type="binding site" evidence="1">
    <location>
        <begin position="155"/>
        <end position="158"/>
    </location>
    <ligand>
        <name>ATP</name>
        <dbReference type="ChEBI" id="CHEBI:30616"/>
    </ligand>
</feature>
<feature type="binding site" evidence="1">
    <location>
        <position position="161"/>
    </location>
    <ligand>
        <name>(R)-pantoate</name>
        <dbReference type="ChEBI" id="CHEBI:15980"/>
    </ligand>
</feature>
<feature type="binding site" evidence="1">
    <location>
        <position position="184"/>
    </location>
    <ligand>
        <name>ATP</name>
        <dbReference type="ChEBI" id="CHEBI:30616"/>
    </ligand>
</feature>
<feature type="binding site" evidence="1">
    <location>
        <begin position="192"/>
        <end position="195"/>
    </location>
    <ligand>
        <name>ATP</name>
        <dbReference type="ChEBI" id="CHEBI:30616"/>
    </ligand>
</feature>
<accession>Q4JXL9</accession>
<keyword id="KW-0067">ATP-binding</keyword>
<keyword id="KW-0963">Cytoplasm</keyword>
<keyword id="KW-0436">Ligase</keyword>
<keyword id="KW-0547">Nucleotide-binding</keyword>
<keyword id="KW-0566">Pantothenate biosynthesis</keyword>
<keyword id="KW-1185">Reference proteome</keyword>
<reference key="1">
    <citation type="journal article" date="2005" name="J. Bacteriol.">
        <title>Complete genome sequence and analysis of the multiresistant nosocomial pathogen Corynebacterium jeikeium K411, a lipid-requiring bacterium of the human skin flora.</title>
        <authorList>
            <person name="Tauch A."/>
            <person name="Kaiser O."/>
            <person name="Hain T."/>
            <person name="Goesmann A."/>
            <person name="Weisshaar B."/>
            <person name="Albersmeier A."/>
            <person name="Bekel T."/>
            <person name="Bischoff N."/>
            <person name="Brune I."/>
            <person name="Chakraborty T."/>
            <person name="Kalinowski J."/>
            <person name="Meyer F."/>
            <person name="Rupp O."/>
            <person name="Schneiker S."/>
            <person name="Viehoever P."/>
            <person name="Puehler A."/>
        </authorList>
    </citation>
    <scope>NUCLEOTIDE SEQUENCE [LARGE SCALE GENOMIC DNA]</scope>
    <source>
        <strain>K411</strain>
    </source>
</reference>
<sequence length="306" mass="32368">MTFTPGQAEVFTEIEKIGQLTRAMRKAGRPVALVPTMGALHEGHLSLVQAAQQIPGALVVVSIFVNPLQFAEGEDLDAYPRTLDEDVAKLKAAGVDAVFAPSPREMYPNGPRTTIHPGEAGRILEGAHRPTHFAGVLTVVNKLFTITHCDHAFFGEKDYQQLLLIQQIVTDLNMEVQVHGVPIVREADGLAKSSRNVYLSDEERELALTLSAALTAGAFVAEQGPAAVLQTAGSILDAASGIDVDYLELRGTDLSDTPEDGEARLLVAARVGTTRLIDNVGVPLGTGFKGLDDGGEGSAPADNAGE</sequence>
<evidence type="ECO:0000255" key="1">
    <source>
        <dbReference type="HAMAP-Rule" id="MF_00158"/>
    </source>
</evidence>
<proteinExistence type="inferred from homology"/>
<protein>
    <recommendedName>
        <fullName evidence="1">Pantothenate synthetase</fullName>
        <shortName evidence="1">PS</shortName>
        <ecNumber evidence="1">6.3.2.1</ecNumber>
    </recommendedName>
    <alternativeName>
        <fullName evidence="1">Pantoate--beta-alanine ligase</fullName>
    </alternativeName>
    <alternativeName>
        <fullName evidence="1">Pantoate-activating enzyme</fullName>
    </alternativeName>
</protein>
<comment type="function">
    <text evidence="1">Catalyzes the condensation of pantoate with beta-alanine in an ATP-dependent reaction via a pantoyl-adenylate intermediate.</text>
</comment>
<comment type="catalytic activity">
    <reaction evidence="1">
        <text>(R)-pantoate + beta-alanine + ATP = (R)-pantothenate + AMP + diphosphate + H(+)</text>
        <dbReference type="Rhea" id="RHEA:10912"/>
        <dbReference type="ChEBI" id="CHEBI:15378"/>
        <dbReference type="ChEBI" id="CHEBI:15980"/>
        <dbReference type="ChEBI" id="CHEBI:29032"/>
        <dbReference type="ChEBI" id="CHEBI:30616"/>
        <dbReference type="ChEBI" id="CHEBI:33019"/>
        <dbReference type="ChEBI" id="CHEBI:57966"/>
        <dbReference type="ChEBI" id="CHEBI:456215"/>
        <dbReference type="EC" id="6.3.2.1"/>
    </reaction>
</comment>
<comment type="pathway">
    <text evidence="1">Cofactor biosynthesis; (R)-pantothenate biosynthesis; (R)-pantothenate from (R)-pantoate and beta-alanine: step 1/1.</text>
</comment>
<comment type="subunit">
    <text evidence="1">Homodimer.</text>
</comment>
<comment type="subcellular location">
    <subcellularLocation>
        <location evidence="1">Cytoplasm</location>
    </subcellularLocation>
</comment>
<comment type="miscellaneous">
    <text evidence="1">The reaction proceeds by a bi uni uni bi ping pong mechanism.</text>
</comment>
<comment type="similarity">
    <text evidence="1">Belongs to the pantothenate synthetase family.</text>
</comment>
<gene>
    <name evidence="1" type="primary">panC</name>
    <name type="ordered locus">jk0286</name>
</gene>
<organism>
    <name type="scientific">Corynebacterium jeikeium (strain K411)</name>
    <dbReference type="NCBI Taxonomy" id="306537"/>
    <lineage>
        <taxon>Bacteria</taxon>
        <taxon>Bacillati</taxon>
        <taxon>Actinomycetota</taxon>
        <taxon>Actinomycetes</taxon>
        <taxon>Mycobacteriales</taxon>
        <taxon>Corynebacteriaceae</taxon>
        <taxon>Corynebacterium</taxon>
    </lineage>
</organism>
<dbReference type="EC" id="6.3.2.1" evidence="1"/>
<dbReference type="EMBL" id="CR931997">
    <property type="protein sequence ID" value="CAI36438.1"/>
    <property type="molecule type" value="Genomic_DNA"/>
</dbReference>
<dbReference type="RefSeq" id="WP_011272998.1">
    <property type="nucleotide sequence ID" value="NC_007164.1"/>
</dbReference>
<dbReference type="SMR" id="Q4JXL9"/>
<dbReference type="STRING" id="306537.jk0286"/>
<dbReference type="KEGG" id="cjk:jk0286"/>
<dbReference type="PATRIC" id="fig|306537.10.peg.296"/>
<dbReference type="eggNOG" id="COG0414">
    <property type="taxonomic scope" value="Bacteria"/>
</dbReference>
<dbReference type="HOGENOM" id="CLU_047148_0_2_11"/>
<dbReference type="OrthoDB" id="9773087at2"/>
<dbReference type="UniPathway" id="UPA00028">
    <property type="reaction ID" value="UER00005"/>
</dbReference>
<dbReference type="Proteomes" id="UP000000545">
    <property type="component" value="Chromosome"/>
</dbReference>
<dbReference type="GO" id="GO:0005829">
    <property type="term" value="C:cytosol"/>
    <property type="evidence" value="ECO:0007669"/>
    <property type="project" value="TreeGrafter"/>
</dbReference>
<dbReference type="GO" id="GO:0005524">
    <property type="term" value="F:ATP binding"/>
    <property type="evidence" value="ECO:0007669"/>
    <property type="project" value="UniProtKB-KW"/>
</dbReference>
<dbReference type="GO" id="GO:0004592">
    <property type="term" value="F:pantoate-beta-alanine ligase activity"/>
    <property type="evidence" value="ECO:0007669"/>
    <property type="project" value="UniProtKB-UniRule"/>
</dbReference>
<dbReference type="GO" id="GO:0015940">
    <property type="term" value="P:pantothenate biosynthetic process"/>
    <property type="evidence" value="ECO:0007669"/>
    <property type="project" value="UniProtKB-UniRule"/>
</dbReference>
<dbReference type="CDD" id="cd00560">
    <property type="entry name" value="PanC"/>
    <property type="match status" value="1"/>
</dbReference>
<dbReference type="FunFam" id="3.40.50.620:FF:000114">
    <property type="entry name" value="Pantothenate synthetase"/>
    <property type="match status" value="1"/>
</dbReference>
<dbReference type="Gene3D" id="3.40.50.620">
    <property type="entry name" value="HUPs"/>
    <property type="match status" value="1"/>
</dbReference>
<dbReference type="Gene3D" id="3.30.1300.10">
    <property type="entry name" value="Pantoate-beta-alanine ligase, C-terminal domain"/>
    <property type="match status" value="1"/>
</dbReference>
<dbReference type="HAMAP" id="MF_00158">
    <property type="entry name" value="PanC"/>
    <property type="match status" value="1"/>
</dbReference>
<dbReference type="InterPro" id="IPR003721">
    <property type="entry name" value="Pantoate_ligase"/>
</dbReference>
<dbReference type="InterPro" id="IPR042176">
    <property type="entry name" value="Pantoate_ligase_C"/>
</dbReference>
<dbReference type="InterPro" id="IPR014729">
    <property type="entry name" value="Rossmann-like_a/b/a_fold"/>
</dbReference>
<dbReference type="NCBIfam" id="TIGR00018">
    <property type="entry name" value="panC"/>
    <property type="match status" value="1"/>
</dbReference>
<dbReference type="PANTHER" id="PTHR21299">
    <property type="entry name" value="CYTIDYLATE KINASE/PANTOATE-BETA-ALANINE LIGASE"/>
    <property type="match status" value="1"/>
</dbReference>
<dbReference type="PANTHER" id="PTHR21299:SF1">
    <property type="entry name" value="PANTOATE--BETA-ALANINE LIGASE"/>
    <property type="match status" value="1"/>
</dbReference>
<dbReference type="Pfam" id="PF02569">
    <property type="entry name" value="Pantoate_ligase"/>
    <property type="match status" value="1"/>
</dbReference>
<dbReference type="SUPFAM" id="SSF52374">
    <property type="entry name" value="Nucleotidylyl transferase"/>
    <property type="match status" value="1"/>
</dbReference>